<sequence>MTVKTRFAPSPTGYLHIGGVRTALFSWAFARHHKGEFLLRIEDTDLARSTAESVNIILDGMKWVGLNYDNADNVVYQTRRFDRYKEVIAELLEKGHAYYCYCSKEELEAMREKAEKEGTATYDRRWRPEAGKTLPEIPAGVQPVVRFKTPLDGVTKWADLVKGEISIPNEALDDLIIARADGTPTYNFCVVVDDYDMGVTHVIRGDDHVNNTPKQINILKAIGANLPEYGHLPMILNEQGKKISKRSGDTVAITDFGAMGILPEAMLNYLARLGWAHGDDEFFTMEQFIEWFDLKDVSPSPSRMDLKKLYWINGEHIKITTNEKLAEMVKPRLALRDIHETSKPALEDVLALVKDRAQDLNALADECLYFYKKQVPAEADVAKHWDDEASARMLRFAERLEGLEDWNTEAIHDLFKPFCDEEGIKMGKLGMPLRLAVCGTAKTPSVDAVLALIGKEEVLKRIRA</sequence>
<name>SYE_NEIMF</name>
<comment type="function">
    <text evidence="1">Catalyzes the attachment of glutamate to tRNA(Glu) in a two-step reaction: glutamate is first activated by ATP to form Glu-AMP and then transferred to the acceptor end of tRNA(Glu).</text>
</comment>
<comment type="catalytic activity">
    <reaction evidence="1">
        <text>tRNA(Glu) + L-glutamate + ATP = L-glutamyl-tRNA(Glu) + AMP + diphosphate</text>
        <dbReference type="Rhea" id="RHEA:23540"/>
        <dbReference type="Rhea" id="RHEA-COMP:9663"/>
        <dbReference type="Rhea" id="RHEA-COMP:9680"/>
        <dbReference type="ChEBI" id="CHEBI:29985"/>
        <dbReference type="ChEBI" id="CHEBI:30616"/>
        <dbReference type="ChEBI" id="CHEBI:33019"/>
        <dbReference type="ChEBI" id="CHEBI:78442"/>
        <dbReference type="ChEBI" id="CHEBI:78520"/>
        <dbReference type="ChEBI" id="CHEBI:456215"/>
        <dbReference type="EC" id="6.1.1.17"/>
    </reaction>
</comment>
<comment type="subunit">
    <text evidence="1">Monomer.</text>
</comment>
<comment type="subcellular location">
    <subcellularLocation>
        <location evidence="1">Cytoplasm</location>
    </subcellularLocation>
</comment>
<comment type="similarity">
    <text evidence="1">Belongs to the class-I aminoacyl-tRNA synthetase family. Glutamate--tRNA ligase type 1 subfamily.</text>
</comment>
<evidence type="ECO:0000255" key="1">
    <source>
        <dbReference type="HAMAP-Rule" id="MF_00022"/>
    </source>
</evidence>
<accession>A1KWM9</accession>
<dbReference type="EC" id="6.1.1.17" evidence="1"/>
<dbReference type="EMBL" id="AM421808">
    <property type="protein sequence ID" value="CAM11289.1"/>
    <property type="molecule type" value="Genomic_DNA"/>
</dbReference>
<dbReference type="RefSeq" id="WP_002221752.1">
    <property type="nucleotide sequence ID" value="NC_008767.1"/>
</dbReference>
<dbReference type="SMR" id="A1KWM9"/>
<dbReference type="KEGG" id="nmc:NMC2141"/>
<dbReference type="HOGENOM" id="CLU_015768_6_1_4"/>
<dbReference type="Proteomes" id="UP000002286">
    <property type="component" value="Chromosome"/>
</dbReference>
<dbReference type="GO" id="GO:0005829">
    <property type="term" value="C:cytosol"/>
    <property type="evidence" value="ECO:0007669"/>
    <property type="project" value="TreeGrafter"/>
</dbReference>
<dbReference type="GO" id="GO:0005524">
    <property type="term" value="F:ATP binding"/>
    <property type="evidence" value="ECO:0007669"/>
    <property type="project" value="UniProtKB-UniRule"/>
</dbReference>
<dbReference type="GO" id="GO:0004818">
    <property type="term" value="F:glutamate-tRNA ligase activity"/>
    <property type="evidence" value="ECO:0007669"/>
    <property type="project" value="UniProtKB-UniRule"/>
</dbReference>
<dbReference type="GO" id="GO:0000049">
    <property type="term" value="F:tRNA binding"/>
    <property type="evidence" value="ECO:0007669"/>
    <property type="project" value="InterPro"/>
</dbReference>
<dbReference type="GO" id="GO:0008270">
    <property type="term" value="F:zinc ion binding"/>
    <property type="evidence" value="ECO:0007669"/>
    <property type="project" value="InterPro"/>
</dbReference>
<dbReference type="GO" id="GO:0006424">
    <property type="term" value="P:glutamyl-tRNA aminoacylation"/>
    <property type="evidence" value="ECO:0007669"/>
    <property type="project" value="UniProtKB-UniRule"/>
</dbReference>
<dbReference type="CDD" id="cd00808">
    <property type="entry name" value="GluRS_core"/>
    <property type="match status" value="1"/>
</dbReference>
<dbReference type="FunFam" id="3.40.50.620:FF:000007">
    <property type="entry name" value="Glutamate--tRNA ligase"/>
    <property type="match status" value="1"/>
</dbReference>
<dbReference type="Gene3D" id="1.10.10.350">
    <property type="match status" value="1"/>
</dbReference>
<dbReference type="Gene3D" id="3.40.50.620">
    <property type="entry name" value="HUPs"/>
    <property type="match status" value="1"/>
</dbReference>
<dbReference type="HAMAP" id="MF_00022">
    <property type="entry name" value="Glu_tRNA_synth_type1"/>
    <property type="match status" value="1"/>
</dbReference>
<dbReference type="InterPro" id="IPR045462">
    <property type="entry name" value="aa-tRNA-synth_I_cd-bd"/>
</dbReference>
<dbReference type="InterPro" id="IPR020751">
    <property type="entry name" value="aa-tRNA-synth_I_codon-bd_sub2"/>
</dbReference>
<dbReference type="InterPro" id="IPR001412">
    <property type="entry name" value="aa-tRNA-synth_I_CS"/>
</dbReference>
<dbReference type="InterPro" id="IPR008925">
    <property type="entry name" value="aa_tRNA-synth_I_cd-bd_sf"/>
</dbReference>
<dbReference type="InterPro" id="IPR004527">
    <property type="entry name" value="Glu-tRNA-ligase_bac/mito"/>
</dbReference>
<dbReference type="InterPro" id="IPR000924">
    <property type="entry name" value="Glu/Gln-tRNA-synth"/>
</dbReference>
<dbReference type="InterPro" id="IPR020058">
    <property type="entry name" value="Glu/Gln-tRNA-synth_Ib_cat-dom"/>
</dbReference>
<dbReference type="InterPro" id="IPR049940">
    <property type="entry name" value="GluQ/Sye"/>
</dbReference>
<dbReference type="InterPro" id="IPR033910">
    <property type="entry name" value="GluRS_core"/>
</dbReference>
<dbReference type="InterPro" id="IPR014729">
    <property type="entry name" value="Rossmann-like_a/b/a_fold"/>
</dbReference>
<dbReference type="NCBIfam" id="TIGR00464">
    <property type="entry name" value="gltX_bact"/>
    <property type="match status" value="1"/>
</dbReference>
<dbReference type="PANTHER" id="PTHR43311">
    <property type="entry name" value="GLUTAMATE--TRNA LIGASE"/>
    <property type="match status" value="1"/>
</dbReference>
<dbReference type="PANTHER" id="PTHR43311:SF2">
    <property type="entry name" value="GLUTAMATE--TRNA LIGASE, MITOCHONDRIAL-RELATED"/>
    <property type="match status" value="1"/>
</dbReference>
<dbReference type="Pfam" id="PF19269">
    <property type="entry name" value="Anticodon_2"/>
    <property type="match status" value="1"/>
</dbReference>
<dbReference type="Pfam" id="PF00749">
    <property type="entry name" value="tRNA-synt_1c"/>
    <property type="match status" value="1"/>
</dbReference>
<dbReference type="PRINTS" id="PR00987">
    <property type="entry name" value="TRNASYNTHGLU"/>
</dbReference>
<dbReference type="SUPFAM" id="SSF48163">
    <property type="entry name" value="An anticodon-binding domain of class I aminoacyl-tRNA synthetases"/>
    <property type="match status" value="1"/>
</dbReference>
<dbReference type="SUPFAM" id="SSF52374">
    <property type="entry name" value="Nucleotidylyl transferase"/>
    <property type="match status" value="1"/>
</dbReference>
<dbReference type="PROSITE" id="PS00178">
    <property type="entry name" value="AA_TRNA_LIGASE_I"/>
    <property type="match status" value="1"/>
</dbReference>
<organism>
    <name type="scientific">Neisseria meningitidis serogroup C / serotype 2a (strain ATCC 700532 / DSM 15464 / FAM18)</name>
    <dbReference type="NCBI Taxonomy" id="272831"/>
    <lineage>
        <taxon>Bacteria</taxon>
        <taxon>Pseudomonadati</taxon>
        <taxon>Pseudomonadota</taxon>
        <taxon>Betaproteobacteria</taxon>
        <taxon>Neisseriales</taxon>
        <taxon>Neisseriaceae</taxon>
        <taxon>Neisseria</taxon>
    </lineage>
</organism>
<protein>
    <recommendedName>
        <fullName evidence="1">Glutamate--tRNA ligase</fullName>
        <ecNumber evidence="1">6.1.1.17</ecNumber>
    </recommendedName>
    <alternativeName>
        <fullName evidence="1">Glutamyl-tRNA synthetase</fullName>
        <shortName evidence="1">GluRS</shortName>
    </alternativeName>
</protein>
<reference key="1">
    <citation type="journal article" date="2007" name="PLoS Genet.">
        <title>Meningococcal genetic variation mechanisms viewed through comparative analysis of serogroup C strain FAM18.</title>
        <authorList>
            <person name="Bentley S.D."/>
            <person name="Vernikos G.S."/>
            <person name="Snyder L.A.S."/>
            <person name="Churcher C."/>
            <person name="Arrowsmith C."/>
            <person name="Chillingworth T."/>
            <person name="Cronin A."/>
            <person name="Davis P.H."/>
            <person name="Holroyd N.E."/>
            <person name="Jagels K."/>
            <person name="Maddison M."/>
            <person name="Moule S."/>
            <person name="Rabbinowitsch E."/>
            <person name="Sharp S."/>
            <person name="Unwin L."/>
            <person name="Whitehead S."/>
            <person name="Quail M.A."/>
            <person name="Achtman M."/>
            <person name="Barrell B.G."/>
            <person name="Saunders N.J."/>
            <person name="Parkhill J."/>
        </authorList>
    </citation>
    <scope>NUCLEOTIDE SEQUENCE [LARGE SCALE GENOMIC DNA]</scope>
    <source>
        <strain>ATCC 700532 / DSM 15464 / FAM18</strain>
    </source>
</reference>
<gene>
    <name evidence="1" type="primary">gltX</name>
    <name type="ordered locus">NMC2141</name>
</gene>
<proteinExistence type="inferred from homology"/>
<keyword id="KW-0030">Aminoacyl-tRNA synthetase</keyword>
<keyword id="KW-0067">ATP-binding</keyword>
<keyword id="KW-0963">Cytoplasm</keyword>
<keyword id="KW-0436">Ligase</keyword>
<keyword id="KW-0547">Nucleotide-binding</keyword>
<keyword id="KW-0648">Protein biosynthesis</keyword>
<feature type="chain" id="PRO_1000001926" description="Glutamate--tRNA ligase">
    <location>
        <begin position="1"/>
        <end position="464"/>
    </location>
</feature>
<feature type="short sequence motif" description="'HIGH' region" evidence="1">
    <location>
        <begin position="9"/>
        <end position="19"/>
    </location>
</feature>
<feature type="short sequence motif" description="'KMSKS' region" evidence="1">
    <location>
        <begin position="242"/>
        <end position="246"/>
    </location>
</feature>
<feature type="binding site" evidence="1">
    <location>
        <position position="245"/>
    </location>
    <ligand>
        <name>ATP</name>
        <dbReference type="ChEBI" id="CHEBI:30616"/>
    </ligand>
</feature>